<keyword id="KW-0210">Decarboxylase</keyword>
<keyword id="KW-0456">Lyase</keyword>
<keyword id="KW-0665">Pyrimidine biosynthesis</keyword>
<sequence>MIDQKVIVALDYDNQADALAFVDRIDPASCRLKVGKEMFTLFGPDFVRELHKRGFSVFLDLKFHDIPNTCSKAVRAAAELGVWMVNVHASGGERMMTASREILEPYGKDRPLLIGVTVLTSMEQSDLAGIGLNVAPQDHVIRLATLTKNSGLDGVVCSAQESSLLKNELGKEFKLVTPGIRPLGSEQGDQRRIMTPLEAVQAGSDYLVIGRPITQAVDPAAVLQAINTSLTK</sequence>
<organism>
    <name type="scientific">Vibrio vulnificus (strain YJ016)</name>
    <dbReference type="NCBI Taxonomy" id="196600"/>
    <lineage>
        <taxon>Bacteria</taxon>
        <taxon>Pseudomonadati</taxon>
        <taxon>Pseudomonadota</taxon>
        <taxon>Gammaproteobacteria</taxon>
        <taxon>Vibrionales</taxon>
        <taxon>Vibrionaceae</taxon>
        <taxon>Vibrio</taxon>
    </lineage>
</organism>
<name>PYRF_VIBVY</name>
<gene>
    <name evidence="1" type="primary">pyrF</name>
    <name type="ordered locus">VV1304</name>
</gene>
<reference key="1">
    <citation type="journal article" date="2003" name="Genome Res.">
        <title>Comparative genome analysis of Vibrio vulnificus, a marine pathogen.</title>
        <authorList>
            <person name="Chen C.-Y."/>
            <person name="Wu K.-M."/>
            <person name="Chang Y.-C."/>
            <person name="Chang C.-H."/>
            <person name="Tsai H.-C."/>
            <person name="Liao T.-L."/>
            <person name="Liu Y.-M."/>
            <person name="Chen H.-J."/>
            <person name="Shen A.B.-T."/>
            <person name="Li J.-C."/>
            <person name="Su T.-L."/>
            <person name="Shao C.-P."/>
            <person name="Lee C.-T."/>
            <person name="Hor L.-I."/>
            <person name="Tsai S.-F."/>
        </authorList>
    </citation>
    <scope>NUCLEOTIDE SEQUENCE [LARGE SCALE GENOMIC DNA]</scope>
    <source>
        <strain>YJ016</strain>
    </source>
</reference>
<comment type="function">
    <text evidence="1">Catalyzes the decarboxylation of orotidine 5'-monophosphate (OMP) to uridine 5'-monophosphate (UMP).</text>
</comment>
<comment type="catalytic activity">
    <reaction evidence="1">
        <text>orotidine 5'-phosphate + H(+) = UMP + CO2</text>
        <dbReference type="Rhea" id="RHEA:11596"/>
        <dbReference type="ChEBI" id="CHEBI:15378"/>
        <dbReference type="ChEBI" id="CHEBI:16526"/>
        <dbReference type="ChEBI" id="CHEBI:57538"/>
        <dbReference type="ChEBI" id="CHEBI:57865"/>
        <dbReference type="EC" id="4.1.1.23"/>
    </reaction>
</comment>
<comment type="pathway">
    <text evidence="1">Pyrimidine metabolism; UMP biosynthesis via de novo pathway; UMP from orotate: step 2/2.</text>
</comment>
<comment type="subunit">
    <text evidence="1">Homodimer.</text>
</comment>
<comment type="similarity">
    <text evidence="1">Belongs to the OMP decarboxylase family. Type 1 subfamily.</text>
</comment>
<evidence type="ECO:0000255" key="1">
    <source>
        <dbReference type="HAMAP-Rule" id="MF_01200"/>
    </source>
</evidence>
<dbReference type="EC" id="4.1.1.23" evidence="1"/>
<dbReference type="EMBL" id="BA000037">
    <property type="protein sequence ID" value="BAC94068.1"/>
    <property type="molecule type" value="Genomic_DNA"/>
</dbReference>
<dbReference type="RefSeq" id="WP_011149988.1">
    <property type="nucleotide sequence ID" value="NC_005139.1"/>
</dbReference>
<dbReference type="SMR" id="Q7MLX2"/>
<dbReference type="STRING" id="672.VV93_v1c12200"/>
<dbReference type="KEGG" id="vvy:VV1304"/>
<dbReference type="PATRIC" id="fig|196600.6.peg.1295"/>
<dbReference type="eggNOG" id="COG0284">
    <property type="taxonomic scope" value="Bacteria"/>
</dbReference>
<dbReference type="HOGENOM" id="CLU_067069_0_0_6"/>
<dbReference type="UniPathway" id="UPA00070">
    <property type="reaction ID" value="UER00120"/>
</dbReference>
<dbReference type="Proteomes" id="UP000002675">
    <property type="component" value="Chromosome I"/>
</dbReference>
<dbReference type="GO" id="GO:0005829">
    <property type="term" value="C:cytosol"/>
    <property type="evidence" value="ECO:0007669"/>
    <property type="project" value="TreeGrafter"/>
</dbReference>
<dbReference type="GO" id="GO:0004590">
    <property type="term" value="F:orotidine-5'-phosphate decarboxylase activity"/>
    <property type="evidence" value="ECO:0007669"/>
    <property type="project" value="UniProtKB-UniRule"/>
</dbReference>
<dbReference type="GO" id="GO:0006207">
    <property type="term" value="P:'de novo' pyrimidine nucleobase biosynthetic process"/>
    <property type="evidence" value="ECO:0007669"/>
    <property type="project" value="InterPro"/>
</dbReference>
<dbReference type="GO" id="GO:0044205">
    <property type="term" value="P:'de novo' UMP biosynthetic process"/>
    <property type="evidence" value="ECO:0007669"/>
    <property type="project" value="UniProtKB-UniRule"/>
</dbReference>
<dbReference type="CDD" id="cd04725">
    <property type="entry name" value="OMP_decarboxylase_like"/>
    <property type="match status" value="1"/>
</dbReference>
<dbReference type="FunFam" id="3.20.20.70:FF:000015">
    <property type="entry name" value="Orotidine 5'-phosphate decarboxylase"/>
    <property type="match status" value="1"/>
</dbReference>
<dbReference type="Gene3D" id="3.20.20.70">
    <property type="entry name" value="Aldolase class I"/>
    <property type="match status" value="1"/>
</dbReference>
<dbReference type="HAMAP" id="MF_01200_B">
    <property type="entry name" value="OMPdecase_type1_B"/>
    <property type="match status" value="1"/>
</dbReference>
<dbReference type="InterPro" id="IPR013785">
    <property type="entry name" value="Aldolase_TIM"/>
</dbReference>
<dbReference type="InterPro" id="IPR014732">
    <property type="entry name" value="OMPdecase"/>
</dbReference>
<dbReference type="InterPro" id="IPR018089">
    <property type="entry name" value="OMPdecase_AS"/>
</dbReference>
<dbReference type="InterPro" id="IPR047596">
    <property type="entry name" value="OMPdecase_bac"/>
</dbReference>
<dbReference type="InterPro" id="IPR001754">
    <property type="entry name" value="OMPdeCOase_dom"/>
</dbReference>
<dbReference type="InterPro" id="IPR011060">
    <property type="entry name" value="RibuloseP-bd_barrel"/>
</dbReference>
<dbReference type="NCBIfam" id="NF001273">
    <property type="entry name" value="PRK00230.1"/>
    <property type="match status" value="1"/>
</dbReference>
<dbReference type="NCBIfam" id="TIGR01740">
    <property type="entry name" value="pyrF"/>
    <property type="match status" value="1"/>
</dbReference>
<dbReference type="PANTHER" id="PTHR32119">
    <property type="entry name" value="OROTIDINE 5'-PHOSPHATE DECARBOXYLASE"/>
    <property type="match status" value="1"/>
</dbReference>
<dbReference type="PANTHER" id="PTHR32119:SF2">
    <property type="entry name" value="OROTIDINE 5'-PHOSPHATE DECARBOXYLASE"/>
    <property type="match status" value="1"/>
</dbReference>
<dbReference type="Pfam" id="PF00215">
    <property type="entry name" value="OMPdecase"/>
    <property type="match status" value="1"/>
</dbReference>
<dbReference type="SMART" id="SM00934">
    <property type="entry name" value="OMPdecase"/>
    <property type="match status" value="1"/>
</dbReference>
<dbReference type="SUPFAM" id="SSF51366">
    <property type="entry name" value="Ribulose-phoshate binding barrel"/>
    <property type="match status" value="1"/>
</dbReference>
<dbReference type="PROSITE" id="PS00156">
    <property type="entry name" value="OMPDECASE"/>
    <property type="match status" value="1"/>
</dbReference>
<accession>Q7MLX2</accession>
<feature type="chain" id="PRO_0000134599" description="Orotidine 5'-phosphate decarboxylase">
    <location>
        <begin position="1"/>
        <end position="232"/>
    </location>
</feature>
<feature type="active site" description="Proton donor" evidence="1">
    <location>
        <position position="62"/>
    </location>
</feature>
<feature type="binding site" evidence="1">
    <location>
        <position position="11"/>
    </location>
    <ligand>
        <name>substrate</name>
    </ligand>
</feature>
<feature type="binding site" evidence="1">
    <location>
        <position position="33"/>
    </location>
    <ligand>
        <name>substrate</name>
    </ligand>
</feature>
<feature type="binding site" evidence="1">
    <location>
        <begin position="60"/>
        <end position="69"/>
    </location>
    <ligand>
        <name>substrate</name>
    </ligand>
</feature>
<feature type="binding site" evidence="1">
    <location>
        <position position="120"/>
    </location>
    <ligand>
        <name>substrate</name>
    </ligand>
</feature>
<feature type="binding site" evidence="1">
    <location>
        <position position="181"/>
    </location>
    <ligand>
        <name>substrate</name>
    </ligand>
</feature>
<feature type="binding site" evidence="1">
    <location>
        <position position="190"/>
    </location>
    <ligand>
        <name>substrate</name>
    </ligand>
</feature>
<feature type="binding site" evidence="1">
    <location>
        <position position="210"/>
    </location>
    <ligand>
        <name>substrate</name>
    </ligand>
</feature>
<feature type="binding site" evidence="1">
    <location>
        <position position="211"/>
    </location>
    <ligand>
        <name>substrate</name>
    </ligand>
</feature>
<proteinExistence type="inferred from homology"/>
<protein>
    <recommendedName>
        <fullName evidence="1">Orotidine 5'-phosphate decarboxylase</fullName>
        <ecNumber evidence="1">4.1.1.23</ecNumber>
    </recommendedName>
    <alternativeName>
        <fullName evidence="1">OMP decarboxylase</fullName>
        <shortName evidence="1">OMPDCase</shortName>
        <shortName evidence="1">OMPdecase</shortName>
    </alternativeName>
</protein>